<feature type="chain" id="PRO_0000355518" description="Large ribosomal subunit protein bL20c">
    <location>
        <begin position="1"/>
        <end position="130"/>
    </location>
</feature>
<sequence>MTRIRRGYIARRRRTKTRFFASSWRGARGNLTRAIIQQRIRAWFSSHRDRTRQKRDFRRLWITRINAAIRENGRSSIYSKLIHNLYKRQLFLNRKMLAQLAILNRNCLYMISNQILKEVDWQESATILEI</sequence>
<reference key="1">
    <citation type="journal article" date="2008" name="Nucleic Acids Res.">
        <title>The complete nucleotide sequences of the five genetically distinct plastid genomes of Oenothera, subsection Oenothera: I. Sequence evaluation and plastome evolution.</title>
        <authorList>
            <person name="Greiner S."/>
            <person name="Wang X."/>
            <person name="Rauwolf U."/>
            <person name="Silber M.V."/>
            <person name="Mayer K."/>
            <person name="Meurer J."/>
            <person name="Haberer G."/>
            <person name="Herrmann R.G."/>
        </authorList>
    </citation>
    <scope>NUCLEOTIDE SEQUENCE [LARGE SCALE GENOMIC DNA]</scope>
    <source>
        <strain>cv. Douthat 1</strain>
    </source>
</reference>
<comment type="function">
    <text evidence="1">Binds directly to 23S ribosomal RNA and is necessary for the in vitro assembly process of the 50S ribosomal subunit. It is not involved in the protein synthesizing functions of that subunit.</text>
</comment>
<comment type="subcellular location">
    <subcellularLocation>
        <location>Plastid</location>
        <location>Chloroplast</location>
    </subcellularLocation>
</comment>
<comment type="similarity">
    <text evidence="1">Belongs to the bacterial ribosomal protein bL20 family.</text>
</comment>
<evidence type="ECO:0000255" key="1">
    <source>
        <dbReference type="HAMAP-Rule" id="MF_00382"/>
    </source>
</evidence>
<evidence type="ECO:0000305" key="2"/>
<accession>B0Z4P9</accession>
<proteinExistence type="inferred from homology"/>
<protein>
    <recommendedName>
        <fullName evidence="1">Large ribosomal subunit protein bL20c</fullName>
    </recommendedName>
    <alternativeName>
        <fullName evidence="2">50S ribosomal protein L20, chloroplastic</fullName>
    </alternativeName>
</protein>
<name>RK20_OENAR</name>
<organism>
    <name type="scientific">Oenothera argillicola</name>
    <name type="common">Appalachian evening primrose</name>
    <dbReference type="NCBI Taxonomy" id="3940"/>
    <lineage>
        <taxon>Eukaryota</taxon>
        <taxon>Viridiplantae</taxon>
        <taxon>Streptophyta</taxon>
        <taxon>Embryophyta</taxon>
        <taxon>Tracheophyta</taxon>
        <taxon>Spermatophyta</taxon>
        <taxon>Magnoliopsida</taxon>
        <taxon>eudicotyledons</taxon>
        <taxon>Gunneridae</taxon>
        <taxon>Pentapetalae</taxon>
        <taxon>rosids</taxon>
        <taxon>malvids</taxon>
        <taxon>Myrtales</taxon>
        <taxon>Onagraceae</taxon>
        <taxon>Onagroideae</taxon>
        <taxon>Onagreae</taxon>
        <taxon>Oenothera</taxon>
    </lineage>
</organism>
<keyword id="KW-0150">Chloroplast</keyword>
<keyword id="KW-0934">Plastid</keyword>
<keyword id="KW-0687">Ribonucleoprotein</keyword>
<keyword id="KW-0689">Ribosomal protein</keyword>
<keyword id="KW-0694">RNA-binding</keyword>
<keyword id="KW-0699">rRNA-binding</keyword>
<dbReference type="EMBL" id="EU262887">
    <property type="protein sequence ID" value="ABW98727.1"/>
    <property type="molecule type" value="Genomic_DNA"/>
</dbReference>
<dbReference type="RefSeq" id="YP_001687160.1">
    <property type="nucleotide sequence ID" value="NC_010358.2"/>
</dbReference>
<dbReference type="SMR" id="B0Z4P9"/>
<dbReference type="GeneID" id="5951839"/>
<dbReference type="GO" id="GO:0009507">
    <property type="term" value="C:chloroplast"/>
    <property type="evidence" value="ECO:0007669"/>
    <property type="project" value="UniProtKB-SubCell"/>
</dbReference>
<dbReference type="GO" id="GO:1990904">
    <property type="term" value="C:ribonucleoprotein complex"/>
    <property type="evidence" value="ECO:0007669"/>
    <property type="project" value="UniProtKB-KW"/>
</dbReference>
<dbReference type="GO" id="GO:0005840">
    <property type="term" value="C:ribosome"/>
    <property type="evidence" value="ECO:0007669"/>
    <property type="project" value="UniProtKB-KW"/>
</dbReference>
<dbReference type="GO" id="GO:0019843">
    <property type="term" value="F:rRNA binding"/>
    <property type="evidence" value="ECO:0007669"/>
    <property type="project" value="UniProtKB-UniRule"/>
</dbReference>
<dbReference type="GO" id="GO:0003735">
    <property type="term" value="F:structural constituent of ribosome"/>
    <property type="evidence" value="ECO:0007669"/>
    <property type="project" value="InterPro"/>
</dbReference>
<dbReference type="GO" id="GO:0000027">
    <property type="term" value="P:ribosomal large subunit assembly"/>
    <property type="evidence" value="ECO:0007669"/>
    <property type="project" value="UniProtKB-UniRule"/>
</dbReference>
<dbReference type="GO" id="GO:0006412">
    <property type="term" value="P:translation"/>
    <property type="evidence" value="ECO:0007669"/>
    <property type="project" value="InterPro"/>
</dbReference>
<dbReference type="CDD" id="cd07026">
    <property type="entry name" value="Ribosomal_L20"/>
    <property type="match status" value="1"/>
</dbReference>
<dbReference type="FunFam" id="1.10.1900.20:FF:000001">
    <property type="entry name" value="50S ribosomal protein L20"/>
    <property type="match status" value="1"/>
</dbReference>
<dbReference type="Gene3D" id="6.10.160.10">
    <property type="match status" value="1"/>
</dbReference>
<dbReference type="Gene3D" id="1.10.1900.20">
    <property type="entry name" value="Ribosomal protein L20"/>
    <property type="match status" value="1"/>
</dbReference>
<dbReference type="HAMAP" id="MF_00382">
    <property type="entry name" value="Ribosomal_bL20"/>
    <property type="match status" value="1"/>
</dbReference>
<dbReference type="InterPro" id="IPR005813">
    <property type="entry name" value="Ribosomal_bL20"/>
</dbReference>
<dbReference type="InterPro" id="IPR049946">
    <property type="entry name" value="RIBOSOMAL_L20_CS"/>
</dbReference>
<dbReference type="InterPro" id="IPR035566">
    <property type="entry name" value="Ribosomal_protein_bL20_C"/>
</dbReference>
<dbReference type="NCBIfam" id="TIGR01032">
    <property type="entry name" value="rplT_bact"/>
    <property type="match status" value="1"/>
</dbReference>
<dbReference type="PANTHER" id="PTHR10986">
    <property type="entry name" value="39S RIBOSOMAL PROTEIN L20"/>
    <property type="match status" value="1"/>
</dbReference>
<dbReference type="Pfam" id="PF00453">
    <property type="entry name" value="Ribosomal_L20"/>
    <property type="match status" value="1"/>
</dbReference>
<dbReference type="PRINTS" id="PR00062">
    <property type="entry name" value="RIBOSOMALL20"/>
</dbReference>
<dbReference type="SUPFAM" id="SSF74731">
    <property type="entry name" value="Ribosomal protein L20"/>
    <property type="match status" value="1"/>
</dbReference>
<dbReference type="PROSITE" id="PS00937">
    <property type="entry name" value="RIBOSOMAL_L20"/>
    <property type="match status" value="1"/>
</dbReference>
<geneLocation type="chloroplast"/>
<gene>
    <name evidence="1" type="primary">rpl20</name>
</gene>